<keyword id="KW-0687">Ribonucleoprotein</keyword>
<keyword id="KW-0689">Ribosomal protein</keyword>
<accession>Q6A5U8</accession>
<gene>
    <name evidence="1" type="primary">rpmB</name>
    <name type="ordered locus">PPA2158</name>
</gene>
<reference key="1">
    <citation type="journal article" date="2004" name="Science">
        <title>The complete genome sequence of Propionibacterium acnes, a commensal of human skin.</title>
        <authorList>
            <person name="Brueggemann H."/>
            <person name="Henne A."/>
            <person name="Hoster F."/>
            <person name="Liesegang H."/>
            <person name="Wiezer A."/>
            <person name="Strittmatter A."/>
            <person name="Hujer S."/>
            <person name="Duerre P."/>
            <person name="Gottschalk G."/>
        </authorList>
    </citation>
    <scope>NUCLEOTIDE SEQUENCE [LARGE SCALE GENOMIC DNA]</scope>
    <source>
        <strain>DSM 16379 / KPA171202</strain>
    </source>
</reference>
<organism>
    <name type="scientific">Cutibacterium acnes (strain DSM 16379 / KPA171202)</name>
    <name type="common">Propionibacterium acnes</name>
    <dbReference type="NCBI Taxonomy" id="267747"/>
    <lineage>
        <taxon>Bacteria</taxon>
        <taxon>Bacillati</taxon>
        <taxon>Actinomycetota</taxon>
        <taxon>Actinomycetes</taxon>
        <taxon>Propionibacteriales</taxon>
        <taxon>Propionibacteriaceae</taxon>
        <taxon>Cutibacterium</taxon>
    </lineage>
</organism>
<name>RL28_CUTAK</name>
<sequence>MSRRCQVRGTKPEFGNNVSHSQRHTKRRWNPNIQKKRYWVPSLGRKVTLTLTPKAIKEIDRRGVDIVVAEMLTRGEKI</sequence>
<proteinExistence type="inferred from homology"/>
<protein>
    <recommendedName>
        <fullName evidence="1">Large ribosomal subunit protein bL28</fullName>
    </recommendedName>
    <alternativeName>
        <fullName evidence="3">50S ribosomal protein L28</fullName>
    </alternativeName>
</protein>
<evidence type="ECO:0000255" key="1">
    <source>
        <dbReference type="HAMAP-Rule" id="MF_00373"/>
    </source>
</evidence>
<evidence type="ECO:0000256" key="2">
    <source>
        <dbReference type="SAM" id="MobiDB-lite"/>
    </source>
</evidence>
<evidence type="ECO:0000305" key="3"/>
<comment type="similarity">
    <text evidence="1">Belongs to the bacterial ribosomal protein bL28 family.</text>
</comment>
<feature type="chain" id="PRO_0000178527" description="Large ribosomal subunit protein bL28">
    <location>
        <begin position="1"/>
        <end position="78"/>
    </location>
</feature>
<feature type="region of interest" description="Disordered" evidence="2">
    <location>
        <begin position="1"/>
        <end position="28"/>
    </location>
</feature>
<dbReference type="EMBL" id="AE017283">
    <property type="protein sequence ID" value="AAT83865.1"/>
    <property type="molecule type" value="Genomic_DNA"/>
</dbReference>
<dbReference type="RefSeq" id="WP_002514593.1">
    <property type="nucleotide sequence ID" value="NZ_CP025935.1"/>
</dbReference>
<dbReference type="SMR" id="Q6A5U8"/>
<dbReference type="EnsemblBacteria" id="AAT83865">
    <property type="protein sequence ID" value="AAT83865"/>
    <property type="gene ID" value="PPA2158"/>
</dbReference>
<dbReference type="KEGG" id="pac:PPA2158"/>
<dbReference type="eggNOG" id="COG0227">
    <property type="taxonomic scope" value="Bacteria"/>
</dbReference>
<dbReference type="HOGENOM" id="CLU_064548_3_1_11"/>
<dbReference type="Proteomes" id="UP000000603">
    <property type="component" value="Chromosome"/>
</dbReference>
<dbReference type="GO" id="GO:1990904">
    <property type="term" value="C:ribonucleoprotein complex"/>
    <property type="evidence" value="ECO:0007669"/>
    <property type="project" value="UniProtKB-KW"/>
</dbReference>
<dbReference type="GO" id="GO:0005840">
    <property type="term" value="C:ribosome"/>
    <property type="evidence" value="ECO:0007669"/>
    <property type="project" value="UniProtKB-KW"/>
</dbReference>
<dbReference type="GO" id="GO:0003735">
    <property type="term" value="F:structural constituent of ribosome"/>
    <property type="evidence" value="ECO:0007669"/>
    <property type="project" value="InterPro"/>
</dbReference>
<dbReference type="GO" id="GO:0006412">
    <property type="term" value="P:translation"/>
    <property type="evidence" value="ECO:0007669"/>
    <property type="project" value="UniProtKB-UniRule"/>
</dbReference>
<dbReference type="FunFam" id="2.30.170.40:FF:000001">
    <property type="entry name" value="50S ribosomal protein L28"/>
    <property type="match status" value="1"/>
</dbReference>
<dbReference type="Gene3D" id="2.30.170.40">
    <property type="entry name" value="Ribosomal protein L28/L24"/>
    <property type="match status" value="1"/>
</dbReference>
<dbReference type="HAMAP" id="MF_00373">
    <property type="entry name" value="Ribosomal_bL28"/>
    <property type="match status" value="1"/>
</dbReference>
<dbReference type="InterPro" id="IPR026569">
    <property type="entry name" value="Ribosomal_bL28"/>
</dbReference>
<dbReference type="InterPro" id="IPR034704">
    <property type="entry name" value="Ribosomal_bL28/bL31-like_sf"/>
</dbReference>
<dbReference type="InterPro" id="IPR001383">
    <property type="entry name" value="Ribosomal_bL28_bact-type"/>
</dbReference>
<dbReference type="InterPro" id="IPR037147">
    <property type="entry name" value="Ribosomal_bL28_sf"/>
</dbReference>
<dbReference type="NCBIfam" id="TIGR00009">
    <property type="entry name" value="L28"/>
    <property type="match status" value="1"/>
</dbReference>
<dbReference type="PANTHER" id="PTHR13528">
    <property type="entry name" value="39S RIBOSOMAL PROTEIN L28, MITOCHONDRIAL"/>
    <property type="match status" value="1"/>
</dbReference>
<dbReference type="PANTHER" id="PTHR13528:SF2">
    <property type="entry name" value="LARGE RIBOSOMAL SUBUNIT PROTEIN BL28M"/>
    <property type="match status" value="1"/>
</dbReference>
<dbReference type="Pfam" id="PF00830">
    <property type="entry name" value="Ribosomal_L28"/>
    <property type="match status" value="1"/>
</dbReference>
<dbReference type="SUPFAM" id="SSF143800">
    <property type="entry name" value="L28p-like"/>
    <property type="match status" value="1"/>
</dbReference>